<organism>
    <name type="scientific">Oncidium hybrid cultivar</name>
    <name type="common">Orchid</name>
    <dbReference type="NCBI Taxonomy" id="141207"/>
    <lineage>
        <taxon>Eukaryota</taxon>
        <taxon>Viridiplantae</taxon>
        <taxon>Streptophyta</taxon>
        <taxon>Embryophyta</taxon>
        <taxon>Tracheophyta</taxon>
        <taxon>Spermatophyta</taxon>
        <taxon>Magnoliopsida</taxon>
        <taxon>Liliopsida</taxon>
        <taxon>Asparagales</taxon>
        <taxon>Orchidaceae</taxon>
        <taxon>Epidendroideae</taxon>
        <taxon>Cymbidieae</taxon>
        <taxon>Oncidiinae</taxon>
        <taxon>Oncidium</taxon>
    </lineage>
</organism>
<comment type="function">
    <text evidence="1">May be involved in carotenoid sequestration within chromoplasts.</text>
</comment>
<comment type="subcellular location">
    <subcellularLocation>
        <location evidence="3">Plastid</location>
        <location evidence="3">Chromoplast</location>
    </subcellularLocation>
</comment>
<comment type="similarity">
    <text evidence="3">Belongs to the PAP/fibrillin family.</text>
</comment>
<evidence type="ECO:0000250" key="1"/>
<evidence type="ECO:0000255" key="2"/>
<evidence type="ECO:0000305" key="3"/>
<keyword id="KW-0957">Chromoplast</keyword>
<keyword id="KW-0934">Plastid</keyword>
<keyword id="KW-0809">Transit peptide</keyword>
<reference key="1">
    <citation type="submission" date="2005-02" db="EMBL/GenBank/DDBJ databases">
        <title>Cloning and expression analysis of fibrillin-like cDNA in Oncidium.</title>
        <authorList>
            <person name="Huang J.-Z."/>
            <person name="Tsai Y.-J."/>
            <person name="Chiang S.-F."/>
            <person name="Cheng T.-C."/>
            <person name="Chen F.-C."/>
        </authorList>
    </citation>
    <scope>NUCLEOTIDE SEQUENCE [MRNA]</scope>
    <source>
        <tissue>Flower</tissue>
    </source>
</reference>
<proteinExistence type="evidence at transcript level"/>
<dbReference type="EMBL" id="AY940147">
    <property type="protein sequence ID" value="AAY24688.1"/>
    <property type="molecule type" value="mRNA"/>
</dbReference>
<dbReference type="SMR" id="B4F6G1"/>
<dbReference type="GO" id="GO:0009509">
    <property type="term" value="C:chromoplast"/>
    <property type="evidence" value="ECO:0007669"/>
    <property type="project" value="UniProtKB-SubCell"/>
</dbReference>
<dbReference type="InterPro" id="IPR039633">
    <property type="entry name" value="PAP"/>
</dbReference>
<dbReference type="InterPro" id="IPR006843">
    <property type="entry name" value="PAP/fibrillin_dom"/>
</dbReference>
<dbReference type="PANTHER" id="PTHR31906">
    <property type="entry name" value="PLASTID-LIPID-ASSOCIATED PROTEIN 4, CHLOROPLASTIC-RELATED"/>
    <property type="match status" value="1"/>
</dbReference>
<dbReference type="Pfam" id="PF04755">
    <property type="entry name" value="PAP_fibrillin"/>
    <property type="match status" value="1"/>
</dbReference>
<gene>
    <name type="primary">CHRC2</name>
    <name type="synonym">FIB2</name>
</gene>
<name>CHRC2_ONCHC</name>
<feature type="transit peptide" description="Chromoplast" evidence="2">
    <location>
        <begin position="1"/>
        <end position="55"/>
    </location>
</feature>
<feature type="chain" id="PRO_0000426717" description="Chromoplast-specific carotenoid-associated protein C2, chromoplastic">
    <location>
        <begin position="56"/>
        <end position="319"/>
    </location>
</feature>
<sequence length="319" mass="34698">MTSIAFCNAFTVNPFLAAARRSPPPLTPLTSVALSPARKPRILAIFHPRTFPSFRVQAIAEDEWESEKKTLKGVVGSVALAEDEKTGADLVVSDLKKKLIDQLFGTDRGLKATSETRAEVNELITQLEAKNPNPAPTEALSLLNGKWILAYTSFVGLFPLLGAESLQQLLKVDEISQTIDSEGFTVQNSVRFVGPFSSTSVTTNAKFEVRSPKRVQIKFEEGIIGTPQLTDSIVIPDKVEFFGQNIDLSPFKGVISSLQDTASSVAKTISSQPPIKFPISNSNAQSWLLTTYLDDELRISRADGGSVFVLILESSPLLT</sequence>
<accession>B4F6G1</accession>
<protein>
    <recommendedName>
        <fullName>Chromoplast-specific carotenoid-associated protein C2, chromoplastic</fullName>
        <shortName>OgCHRC2</shortName>
    </recommendedName>
    <alternativeName>
        <fullName>Chromoplast specific carotenoid associated protein C2</fullName>
    </alternativeName>
    <alternativeName>
        <fullName>Fibrillin-like protein 2</fullName>
    </alternativeName>
</protein>